<evidence type="ECO:0000250" key="1"/>
<evidence type="ECO:0000255" key="2"/>
<evidence type="ECO:0000256" key="3">
    <source>
        <dbReference type="SAM" id="MobiDB-lite"/>
    </source>
</evidence>
<evidence type="ECO:0000305" key="4"/>
<sequence length="553" mass="61452">MFGEGNKPTEPVPAYDAGQDPFQGPNASKNQYQGSAADYNGAPPPPASQPGNQYQFRQDQYYNLNAEGEGAPIGSFEEKFPVEGEDSKPKWNDWPFTIFFAGCVIAFIVVAAITLRAWSQNSSSQGSGVYDGANTGTLTTNSAIMLAISCIIAFVFSIIGIVLARMFPKFFIIAGILFNIIAGLATAIMYLSLKYYSAGIVFLVFTAICALFYWRMRHRIPFTVAVLKTVMDVMKSYPQTWFVTLIGSIIATAFSILFSAVIVATYMKYDDKANNPGCSTNGGSCSNAKLIGLLVLVFFCGYYIAEVIRNVIHCTVSGIFGAWYYFSKSDQGMPKWPGFGALKRSLTYSFGSICFGSLIVTIIETLKAVLRLAVDGVMGGGGADNGWMQCLALIANWIFSFLEWLARYFNHYAYVFIALYGKPYLRAAKETWYMLREKGIDALINDNLVNVALSFFTLFTCYITTLFAYLYLRYTDPNYNDNNNFTPALMAFAFVIAMEICNVITETIRSGTATFFVALGNDPEVFHLSYPERFDEIFRAYPEVLKKLSHQNV</sequence>
<gene>
    <name type="primary">PNS1</name>
    <name type="ordered locus">KLLA0A02343g</name>
</gene>
<feature type="chain" id="PRO_0000191736" description="Protein PNS1">
    <location>
        <begin position="1"/>
        <end position="553"/>
    </location>
</feature>
<feature type="topological domain" description="Cytoplasmic" evidence="2">
    <location>
        <begin position="1"/>
        <end position="94"/>
    </location>
</feature>
<feature type="transmembrane region" description="Helical" evidence="2">
    <location>
        <begin position="95"/>
        <end position="115"/>
    </location>
</feature>
<feature type="topological domain" description="Extracellular" evidence="2">
    <location>
        <begin position="116"/>
        <end position="142"/>
    </location>
</feature>
<feature type="transmembrane region" description="Helical" evidence="2">
    <location>
        <begin position="143"/>
        <end position="163"/>
    </location>
</feature>
<feature type="topological domain" description="Cytoplasmic" evidence="2">
    <location>
        <begin position="164"/>
        <end position="169"/>
    </location>
</feature>
<feature type="transmembrane region" description="Helical" evidence="2">
    <location>
        <begin position="170"/>
        <end position="190"/>
    </location>
</feature>
<feature type="topological domain" description="Extracellular" evidence="2">
    <location>
        <begin position="191"/>
        <end position="192"/>
    </location>
</feature>
<feature type="transmembrane region" description="Helical" evidence="2">
    <location>
        <begin position="193"/>
        <end position="213"/>
    </location>
</feature>
<feature type="topological domain" description="Cytoplasmic" evidence="2">
    <location>
        <begin position="214"/>
        <end position="241"/>
    </location>
</feature>
<feature type="transmembrane region" description="Helical" evidence="2">
    <location>
        <begin position="242"/>
        <end position="262"/>
    </location>
</feature>
<feature type="topological domain" description="Extracellular" evidence="2">
    <location>
        <begin position="263"/>
        <end position="287"/>
    </location>
</feature>
<feature type="transmembrane region" description="Helical" evidence="2">
    <location>
        <begin position="288"/>
        <end position="308"/>
    </location>
</feature>
<feature type="topological domain" description="Cytoplasmic" evidence="2">
    <location>
        <begin position="309"/>
        <end position="349"/>
    </location>
</feature>
<feature type="transmembrane region" description="Helical" evidence="2">
    <location>
        <begin position="350"/>
        <end position="370"/>
    </location>
</feature>
<feature type="topological domain" description="Extracellular" evidence="2">
    <location>
        <begin position="371"/>
        <end position="385"/>
    </location>
</feature>
<feature type="transmembrane region" description="Helical" evidence="2">
    <location>
        <begin position="386"/>
        <end position="406"/>
    </location>
</feature>
<feature type="topological domain" description="Cytoplasmic" evidence="2">
    <location>
        <begin position="407"/>
        <end position="450"/>
    </location>
</feature>
<feature type="transmembrane region" description="Helical" evidence="2">
    <location>
        <begin position="451"/>
        <end position="471"/>
    </location>
</feature>
<feature type="topological domain" description="Extracellular" evidence="2">
    <location>
        <begin position="472"/>
        <end position="484"/>
    </location>
</feature>
<feature type="transmembrane region" description="Helical" evidence="2">
    <location>
        <begin position="485"/>
        <end position="505"/>
    </location>
</feature>
<feature type="topological domain" description="Cytoplasmic" evidence="2">
    <location>
        <begin position="506"/>
        <end position="553"/>
    </location>
</feature>
<feature type="region of interest" description="Disordered" evidence="3">
    <location>
        <begin position="1"/>
        <end position="53"/>
    </location>
</feature>
<feature type="compositionally biased region" description="Polar residues" evidence="3">
    <location>
        <begin position="25"/>
        <end position="34"/>
    </location>
</feature>
<feature type="glycosylation site" description="N-linked (GlcNAc...) asparagine" evidence="2">
    <location>
        <position position="121"/>
    </location>
</feature>
<accession>Q6CY85</accession>
<keyword id="KW-1003">Cell membrane</keyword>
<keyword id="KW-0325">Glycoprotein</keyword>
<keyword id="KW-0472">Membrane</keyword>
<keyword id="KW-1185">Reference proteome</keyword>
<keyword id="KW-0812">Transmembrane</keyword>
<keyword id="KW-1133">Transmembrane helix</keyword>
<keyword id="KW-0813">Transport</keyword>
<reference key="1">
    <citation type="journal article" date="2004" name="Nature">
        <title>Genome evolution in yeasts.</title>
        <authorList>
            <person name="Dujon B."/>
            <person name="Sherman D."/>
            <person name="Fischer G."/>
            <person name="Durrens P."/>
            <person name="Casaregola S."/>
            <person name="Lafontaine I."/>
            <person name="de Montigny J."/>
            <person name="Marck C."/>
            <person name="Neuveglise C."/>
            <person name="Talla E."/>
            <person name="Goffard N."/>
            <person name="Frangeul L."/>
            <person name="Aigle M."/>
            <person name="Anthouard V."/>
            <person name="Babour A."/>
            <person name="Barbe V."/>
            <person name="Barnay S."/>
            <person name="Blanchin S."/>
            <person name="Beckerich J.-M."/>
            <person name="Beyne E."/>
            <person name="Bleykasten C."/>
            <person name="Boisrame A."/>
            <person name="Boyer J."/>
            <person name="Cattolico L."/>
            <person name="Confanioleri F."/>
            <person name="de Daruvar A."/>
            <person name="Despons L."/>
            <person name="Fabre E."/>
            <person name="Fairhead C."/>
            <person name="Ferry-Dumazet H."/>
            <person name="Groppi A."/>
            <person name="Hantraye F."/>
            <person name="Hennequin C."/>
            <person name="Jauniaux N."/>
            <person name="Joyet P."/>
            <person name="Kachouri R."/>
            <person name="Kerrest A."/>
            <person name="Koszul R."/>
            <person name="Lemaire M."/>
            <person name="Lesur I."/>
            <person name="Ma L."/>
            <person name="Muller H."/>
            <person name="Nicaud J.-M."/>
            <person name="Nikolski M."/>
            <person name="Oztas S."/>
            <person name="Ozier-Kalogeropoulos O."/>
            <person name="Pellenz S."/>
            <person name="Potier S."/>
            <person name="Richard G.-F."/>
            <person name="Straub M.-L."/>
            <person name="Suleau A."/>
            <person name="Swennen D."/>
            <person name="Tekaia F."/>
            <person name="Wesolowski-Louvel M."/>
            <person name="Westhof E."/>
            <person name="Wirth B."/>
            <person name="Zeniou-Meyer M."/>
            <person name="Zivanovic Y."/>
            <person name="Bolotin-Fukuhara M."/>
            <person name="Thierry A."/>
            <person name="Bouchier C."/>
            <person name="Caudron B."/>
            <person name="Scarpelli C."/>
            <person name="Gaillardin C."/>
            <person name="Weissenbach J."/>
            <person name="Wincker P."/>
            <person name="Souciet J.-L."/>
        </authorList>
    </citation>
    <scope>NUCLEOTIDE SEQUENCE [LARGE SCALE GENOMIC DNA]</scope>
    <source>
        <strain>ATCC 8585 / CBS 2359 / DSM 70799 / NBRC 1267 / NRRL Y-1140 / WM37</strain>
    </source>
</reference>
<protein>
    <recommendedName>
        <fullName>Protein PNS1</fullName>
    </recommendedName>
</protein>
<name>PNS1_KLULA</name>
<dbReference type="EMBL" id="CR382121">
    <property type="protein sequence ID" value="CAH02692.1"/>
    <property type="molecule type" value="Genomic_DNA"/>
</dbReference>
<dbReference type="RefSeq" id="XP_451104.1">
    <property type="nucleotide sequence ID" value="XM_451104.1"/>
</dbReference>
<dbReference type="SMR" id="Q6CY85"/>
<dbReference type="FunCoup" id="Q6CY85">
    <property type="interactions" value="253"/>
</dbReference>
<dbReference type="STRING" id="284590.Q6CY85"/>
<dbReference type="GlyCosmos" id="Q6CY85">
    <property type="glycosylation" value="1 site, No reported glycans"/>
</dbReference>
<dbReference type="PaxDb" id="284590-Q6CY85"/>
<dbReference type="KEGG" id="kla:KLLA0_A02343g"/>
<dbReference type="eggNOG" id="KOG1362">
    <property type="taxonomic scope" value="Eukaryota"/>
</dbReference>
<dbReference type="HOGENOM" id="CLU_026724_0_0_1"/>
<dbReference type="InParanoid" id="Q6CY85"/>
<dbReference type="OMA" id="DTIFVAM"/>
<dbReference type="Proteomes" id="UP000000598">
    <property type="component" value="Chromosome A"/>
</dbReference>
<dbReference type="GO" id="GO:0005886">
    <property type="term" value="C:plasma membrane"/>
    <property type="evidence" value="ECO:0007669"/>
    <property type="project" value="UniProtKB-SubCell"/>
</dbReference>
<dbReference type="GO" id="GO:0022857">
    <property type="term" value="F:transmembrane transporter activity"/>
    <property type="evidence" value="ECO:0007669"/>
    <property type="project" value="InterPro"/>
</dbReference>
<dbReference type="InterPro" id="IPR007603">
    <property type="entry name" value="Choline_transptr-like"/>
</dbReference>
<dbReference type="PANTHER" id="PTHR12385">
    <property type="entry name" value="CHOLINE TRANSPORTER-LIKE (SLC FAMILY 44)"/>
    <property type="match status" value="1"/>
</dbReference>
<dbReference type="PANTHER" id="PTHR12385:SF4">
    <property type="entry name" value="PROTEIN PNS1"/>
    <property type="match status" value="1"/>
</dbReference>
<dbReference type="Pfam" id="PF04515">
    <property type="entry name" value="Choline_transpo"/>
    <property type="match status" value="1"/>
</dbReference>
<organism>
    <name type="scientific">Kluyveromyces lactis (strain ATCC 8585 / CBS 2359 / DSM 70799 / NBRC 1267 / NRRL Y-1140 / WM37)</name>
    <name type="common">Yeast</name>
    <name type="synonym">Candida sphaerica</name>
    <dbReference type="NCBI Taxonomy" id="284590"/>
    <lineage>
        <taxon>Eukaryota</taxon>
        <taxon>Fungi</taxon>
        <taxon>Dikarya</taxon>
        <taxon>Ascomycota</taxon>
        <taxon>Saccharomycotina</taxon>
        <taxon>Saccharomycetes</taxon>
        <taxon>Saccharomycetales</taxon>
        <taxon>Saccharomycetaceae</taxon>
        <taxon>Kluyveromyces</taxon>
    </lineage>
</organism>
<proteinExistence type="inferred from homology"/>
<comment type="function">
    <text evidence="1">Probably involved in transport through the plasma membrane.</text>
</comment>
<comment type="subcellular location">
    <subcellularLocation>
        <location evidence="1">Cell membrane</location>
        <topology evidence="1">Multi-pass membrane protein</topology>
    </subcellularLocation>
</comment>
<comment type="similarity">
    <text evidence="4">Belongs to the CTL (choline transporter-like) family.</text>
</comment>